<gene>
    <name type="primary">HST1</name>
    <name type="synonym">HASTY</name>
    <name type="ordered locus">At3g05040</name>
    <name type="ORF">T9J14.1</name>
</gene>
<reference key="1">
    <citation type="journal article" date="2003" name="Development">
        <title>HASTY, the Arabidopsis ortholog of exportin 5/MSN5, regulates phase change and morphogenesis.</title>
        <authorList>
            <person name="Bollman K.M."/>
            <person name="Aukerman M.J."/>
            <person name="Park M.Y."/>
            <person name="Hunter C."/>
            <person name="Berardini T.Z."/>
            <person name="Poethig R.S."/>
        </authorList>
    </citation>
    <scope>NUCLEOTIDE SEQUENCE [MRNA]</scope>
    <scope>FUNCTION</scope>
    <scope>SUBCELLULAR LOCATION</scope>
    <scope>TISSUE SPECIFICITY</scope>
    <scope>INTERACTION WITH RAN1</scope>
    <scope>DISRUPTION PHENOTYPE</scope>
    <scope>MUTAGENESIS OF 36-ASP--SER-37</scope>
</reference>
<reference key="2">
    <citation type="journal article" date="2000" name="Nature">
        <title>Sequence and analysis of chromosome 3 of the plant Arabidopsis thaliana.</title>
        <authorList>
            <person name="Salanoubat M."/>
            <person name="Lemcke K."/>
            <person name="Rieger M."/>
            <person name="Ansorge W."/>
            <person name="Unseld M."/>
            <person name="Fartmann B."/>
            <person name="Valle G."/>
            <person name="Bloecker H."/>
            <person name="Perez-Alonso M."/>
            <person name="Obermaier B."/>
            <person name="Delseny M."/>
            <person name="Boutry M."/>
            <person name="Grivell L.A."/>
            <person name="Mache R."/>
            <person name="Puigdomenech P."/>
            <person name="De Simone V."/>
            <person name="Choisne N."/>
            <person name="Artiguenave F."/>
            <person name="Robert C."/>
            <person name="Brottier P."/>
            <person name="Wincker P."/>
            <person name="Cattolico L."/>
            <person name="Weissenbach J."/>
            <person name="Saurin W."/>
            <person name="Quetier F."/>
            <person name="Schaefer M."/>
            <person name="Mueller-Auer S."/>
            <person name="Gabel C."/>
            <person name="Fuchs M."/>
            <person name="Benes V."/>
            <person name="Wurmbach E."/>
            <person name="Drzonek H."/>
            <person name="Erfle H."/>
            <person name="Jordan N."/>
            <person name="Bangert S."/>
            <person name="Wiedelmann R."/>
            <person name="Kranz H."/>
            <person name="Voss H."/>
            <person name="Holland R."/>
            <person name="Brandt P."/>
            <person name="Nyakatura G."/>
            <person name="Vezzi A."/>
            <person name="D'Angelo M."/>
            <person name="Pallavicini A."/>
            <person name="Toppo S."/>
            <person name="Simionati B."/>
            <person name="Conrad A."/>
            <person name="Hornischer K."/>
            <person name="Kauer G."/>
            <person name="Loehnert T.-H."/>
            <person name="Nordsiek G."/>
            <person name="Reichelt J."/>
            <person name="Scharfe M."/>
            <person name="Schoen O."/>
            <person name="Bargues M."/>
            <person name="Terol J."/>
            <person name="Climent J."/>
            <person name="Navarro P."/>
            <person name="Collado C."/>
            <person name="Perez-Perez A."/>
            <person name="Ottenwaelder B."/>
            <person name="Duchemin D."/>
            <person name="Cooke R."/>
            <person name="Laudie M."/>
            <person name="Berger-Llauro C."/>
            <person name="Purnelle B."/>
            <person name="Masuy D."/>
            <person name="de Haan M."/>
            <person name="Maarse A.C."/>
            <person name="Alcaraz J.-P."/>
            <person name="Cottet A."/>
            <person name="Casacuberta E."/>
            <person name="Monfort A."/>
            <person name="Argiriou A."/>
            <person name="Flores M."/>
            <person name="Liguori R."/>
            <person name="Vitale D."/>
            <person name="Mannhaupt G."/>
            <person name="Haase D."/>
            <person name="Schoof H."/>
            <person name="Rudd S."/>
            <person name="Zaccaria P."/>
            <person name="Mewes H.-W."/>
            <person name="Mayer K.F.X."/>
            <person name="Kaul S."/>
            <person name="Town C.D."/>
            <person name="Koo H.L."/>
            <person name="Tallon L.J."/>
            <person name="Jenkins J."/>
            <person name="Rooney T."/>
            <person name="Rizzo M."/>
            <person name="Walts A."/>
            <person name="Utterback T."/>
            <person name="Fujii C.Y."/>
            <person name="Shea T.P."/>
            <person name="Creasy T.H."/>
            <person name="Haas B."/>
            <person name="Maiti R."/>
            <person name="Wu D."/>
            <person name="Peterson J."/>
            <person name="Van Aken S."/>
            <person name="Pai G."/>
            <person name="Militscher J."/>
            <person name="Sellers P."/>
            <person name="Gill J.E."/>
            <person name="Feldblyum T.V."/>
            <person name="Preuss D."/>
            <person name="Lin X."/>
            <person name="Nierman W.C."/>
            <person name="Salzberg S.L."/>
            <person name="White O."/>
            <person name="Venter J.C."/>
            <person name="Fraser C.M."/>
            <person name="Kaneko T."/>
            <person name="Nakamura Y."/>
            <person name="Sato S."/>
            <person name="Kato T."/>
            <person name="Asamizu E."/>
            <person name="Sasamoto S."/>
            <person name="Kimura T."/>
            <person name="Idesawa K."/>
            <person name="Kawashima K."/>
            <person name="Kishida Y."/>
            <person name="Kiyokawa C."/>
            <person name="Kohara M."/>
            <person name="Matsumoto M."/>
            <person name="Matsuno A."/>
            <person name="Muraki A."/>
            <person name="Nakayama S."/>
            <person name="Nakazaki N."/>
            <person name="Shinpo S."/>
            <person name="Takeuchi C."/>
            <person name="Wada T."/>
            <person name="Watanabe A."/>
            <person name="Yamada M."/>
            <person name="Yasuda M."/>
            <person name="Tabata S."/>
        </authorList>
    </citation>
    <scope>NUCLEOTIDE SEQUENCE [LARGE SCALE GENOMIC DNA]</scope>
    <source>
        <strain>cv. Columbia</strain>
    </source>
</reference>
<reference key="3">
    <citation type="journal article" date="2017" name="Plant J.">
        <title>Araport11: a complete reannotation of the Arabidopsis thaliana reference genome.</title>
        <authorList>
            <person name="Cheng C.Y."/>
            <person name="Krishnakumar V."/>
            <person name="Chan A.P."/>
            <person name="Thibaud-Nissen F."/>
            <person name="Schobel S."/>
            <person name="Town C.D."/>
        </authorList>
    </citation>
    <scope>GENOME REANNOTATION</scope>
    <source>
        <strain>cv. Columbia</strain>
    </source>
</reference>
<reference key="4">
    <citation type="submission" date="2006-07" db="EMBL/GenBank/DDBJ databases">
        <title>Large-scale analysis of RIKEN Arabidopsis full-length (RAFL) cDNAs.</title>
        <authorList>
            <person name="Totoki Y."/>
            <person name="Seki M."/>
            <person name="Ishida J."/>
            <person name="Nakajima M."/>
            <person name="Enju A."/>
            <person name="Kamiya A."/>
            <person name="Narusaka M."/>
            <person name="Shin-i T."/>
            <person name="Nakagawa M."/>
            <person name="Sakamoto N."/>
            <person name="Oishi K."/>
            <person name="Kohara Y."/>
            <person name="Kobayashi M."/>
            <person name="Toyoda A."/>
            <person name="Sakaki Y."/>
            <person name="Sakurai T."/>
            <person name="Iida K."/>
            <person name="Akiyama K."/>
            <person name="Satou M."/>
            <person name="Toyoda T."/>
            <person name="Konagaya A."/>
            <person name="Carninci P."/>
            <person name="Kawai J."/>
            <person name="Hayashizaki Y."/>
            <person name="Shinozaki K."/>
        </authorList>
    </citation>
    <scope>NUCLEOTIDE SEQUENCE [LARGE SCALE MRNA]</scope>
    <source>
        <strain>cv. Columbia</strain>
    </source>
</reference>
<reference key="5">
    <citation type="journal article" date="2005" name="Proc. Natl. Acad. Sci. U.S.A.">
        <title>Nuclear processing and export of microRNAs in Arabidopsis.</title>
        <authorList>
            <person name="Park M.Y."/>
            <person name="Wu G."/>
            <person name="Gonzalez-Sulser A."/>
            <person name="Vaucheret H."/>
            <person name="Poethig R.S."/>
        </authorList>
    </citation>
    <scope>FUNCTION</scope>
    <scope>DISRUPTION PHENOTYPE</scope>
</reference>
<reference key="6">
    <citation type="journal article" date="2006" name="Development">
        <title>Temporal regulation of shoot development in Arabidopsis thaliana by miR156 and its target SPL3.</title>
        <authorList>
            <person name="Wu G."/>
            <person name="Poethig R.S."/>
        </authorList>
    </citation>
    <scope>FUNCTION</scope>
</reference>
<reference key="7">
    <citation type="journal article" date="2012" name="Mol. Cell. Proteomics">
        <title>Comparative large-scale characterisation of plant vs. mammal proteins reveals similar and idiosyncratic N-alpha acetylation features.</title>
        <authorList>
            <person name="Bienvenut W.V."/>
            <person name="Sumpton D."/>
            <person name="Martinez A."/>
            <person name="Lilla S."/>
            <person name="Espagne C."/>
            <person name="Meinnel T."/>
            <person name="Giglione C."/>
        </authorList>
    </citation>
    <scope>ACETYLATION [LARGE SCALE ANALYSIS] AT MET-1</scope>
    <scope>IDENTIFICATION BY MASS SPECTROMETRY [LARGE SCALE ANALYSIS]</scope>
</reference>
<evidence type="ECO:0000269" key="1">
    <source>
    </source>
</evidence>
<evidence type="ECO:0000269" key="2">
    <source>
    </source>
</evidence>
<evidence type="ECO:0000269" key="3">
    <source>
    </source>
</evidence>
<evidence type="ECO:0000305" key="4"/>
<evidence type="ECO:0007744" key="5">
    <source>
    </source>
</evidence>
<protein>
    <recommendedName>
        <fullName>Protein HASTY 1</fullName>
    </recommendedName>
    <alternativeName>
        <fullName>Protein HASTY</fullName>
    </alternativeName>
</protein>
<accession>Q0WP44</accession>
<accession>Q84UC4</accession>
<accession>Q9CAW7</accession>
<comment type="function">
    <text evidence="1 2 3">Nucleocytoplasmic transporter involved in the nuclear export of microRNAs (miRNAs). Required for several miRNAs accumulation. Specifically required for miR156 accumulation which targets SPL3, SPL4 and SPL5 transcription factors. Involved in plant development through its role in miRNAs processing. Required for vegetative phase change and vegetative to reproductive phase transition. Functionally dependent on RAN1 binding. Does not seem to be involved in small interfering RNAs (siRNAs) processing.</text>
</comment>
<comment type="subunit">
    <text evidence="1">Interacts with RAN1.</text>
</comment>
<comment type="subcellular location">
    <subcellularLocation>
        <location evidence="1">Nucleus</location>
    </subcellularLocation>
    <text>Nuclear periphery.</text>
</comment>
<comment type="tissue specificity">
    <text evidence="1">Expressed in roots, leaves and floral buds.</text>
</comment>
<comment type="disruption phenotype">
    <text evidence="1 2">Reduced size of roots and shoot lateral organs. Accelerated vegetative phase change. Increased adaxial trichome density. Disruption of phyllotaxis of the inflorescence. Reduced fertility. Reduced levels of several miRNAs and increased levels of their targeted transcripts.</text>
</comment>
<comment type="similarity">
    <text evidence="4">Belongs to the exportin family.</text>
</comment>
<comment type="sequence caution" evidence="4">
    <conflict type="erroneous gene model prediction">
        <sequence resource="EMBL-CDS" id="AAG51401"/>
    </conflict>
</comment>
<organism>
    <name type="scientific">Arabidopsis thaliana</name>
    <name type="common">Mouse-ear cress</name>
    <dbReference type="NCBI Taxonomy" id="3702"/>
    <lineage>
        <taxon>Eukaryota</taxon>
        <taxon>Viridiplantae</taxon>
        <taxon>Streptophyta</taxon>
        <taxon>Embryophyta</taxon>
        <taxon>Tracheophyta</taxon>
        <taxon>Spermatophyta</taxon>
        <taxon>Magnoliopsida</taxon>
        <taxon>eudicotyledons</taxon>
        <taxon>Gunneridae</taxon>
        <taxon>Pentapetalae</taxon>
        <taxon>rosids</taxon>
        <taxon>malvids</taxon>
        <taxon>Brassicales</taxon>
        <taxon>Brassicaceae</taxon>
        <taxon>Camelineae</taxon>
        <taxon>Arabidopsis</taxon>
    </lineage>
</organism>
<proteinExistence type="evidence at protein level"/>
<keyword id="KW-0007">Acetylation</keyword>
<keyword id="KW-0539">Nucleus</keyword>
<keyword id="KW-1185">Reference proteome</keyword>
<keyword id="KW-0943">RNA-mediated gene silencing</keyword>
<keyword id="KW-0813">Transport</keyword>
<sequence>MEDSNSTASNVARAILAVVDFSSTSDTRKSAVQFLDSVKSGDVRVLAKTSFHLVKKEWSSEIRLHAFKMLQHLVRLRWDELSPPECRGLVNLSIELMSEVANASENWPLKSQSAALVAEIVRREGPDRWQEIFTLLTSLSAQGPLQAELVLMTLRWLPEDITIYNDDLEGDRRRLLLRGLTQSLPEILPLLYNLLERHFGAAMSEAGMQHFDLAKQHADVVIACLNAIVAYTEWAPVPDLARYGILSGCSFLLSSSDFRLHACEVFKLVCSRKRPSDASTAEFDSAISNLFQILTNASREFLCRSSSSSSVIDDNDYDFAVCMCESMASLGSTNLQSISSDGGVMAVYLQQMLGFFQHFKLGLHFEALLFWLSLMRDLLPKPKAATYPSGGGSSTGGDDSSSQVDSEKKKTLSLINDDISSAILDVSFQRMLKKEKVPTGIALSLGPLELWSDEFEGKGDFGPYRSKLLELIKLTASHKPLISSTKISERVITLIKHLLASPAPLQHVAVMDSQQLALDCIVATLFDGSNEFAGGSSEVHYALRGIFEGLLQQLLSLKWNEPELMKVHVHYLDAMGPFLKYFPDAVGSLINKLFELLTSLPHVVKDPATSTSRAARLQICTSFIRIAKAAEKSVLPHMKGIADTMGYLAKEGTLLRGEHNILGEAFLVMASSAGAQQQQEVLAWLLEPLSQQWIQPEWQNNYLSDPMGLVRLCSNTSFMWSIYHTVTFFEKALKRSGYRKSNLNTTSATTPASHPMAHHLSWMLPPLLKLLRVLHSLWSPSVFQTLPPEMRAAMTMTDAERYSLLGEANPKLSKGVSVYADGSFEGTKEGQAEASESDIRNWLKGIRDCGYNVLGLSTTIGETFFKCLDANYVAMALMENLQSMEFRHIRLFIHTFITYIVKSCPADMWESWLGVLLHPLFIHCQQALSSAWPGLLQEGRAKVPDLFGIQSGSDMKLEVMEEKLLRDLTREIATLFSTMASPGLNTGVPVLEHSGHVGRVDMSTLTDLHAFRSNSMVGFLLNHKSVALPALQICLETFTWTDGEATTKVCYFCGVVVLLAKLTNNVELREFVSKDMFSAVIRGLGMESNAINSPDLVNICREIFIYLSDRDPAPRQVLLSLPCLTPNDLHAFEEATAKTSSPKEQKQLMRSLLLLGTGNNLKALAAQKSQNVITNVTARTRLPASAPETIGAGVLWDEEFVQ</sequence>
<name>HASTY_ARATH</name>
<feature type="chain" id="PRO_0000404657" description="Protein HASTY 1">
    <location>
        <begin position="1"/>
        <end position="1202"/>
    </location>
</feature>
<feature type="modified residue" description="N-acetylmethionine" evidence="5">
    <location>
        <position position="1"/>
    </location>
</feature>
<feature type="mutagenesis site" description="In hst-3; loss of binding to RAN1 and miRNA transport function." evidence="1">
    <original>DS</original>
    <variation>A</variation>
    <location>
        <begin position="36"/>
        <end position="37"/>
    </location>
</feature>
<feature type="sequence conflict" description="In Ref. 1; AAO34666." evidence="4" ref="1">
    <original>Q</original>
    <variation>H</variation>
    <location>
        <position position="695"/>
    </location>
</feature>
<dbReference type="EMBL" id="AY198396">
    <property type="protein sequence ID" value="AAO34666.1"/>
    <property type="molecule type" value="mRNA"/>
</dbReference>
<dbReference type="EMBL" id="AC009465">
    <property type="protein sequence ID" value="AAG51401.1"/>
    <property type="status" value="ALT_SEQ"/>
    <property type="molecule type" value="Genomic_DNA"/>
</dbReference>
<dbReference type="EMBL" id="CP002686">
    <property type="protein sequence ID" value="AEE74179.1"/>
    <property type="molecule type" value="Genomic_DNA"/>
</dbReference>
<dbReference type="EMBL" id="AK229239">
    <property type="protein sequence ID" value="BAF01105.1"/>
    <property type="molecule type" value="mRNA"/>
</dbReference>
<dbReference type="RefSeq" id="NP_187155.2">
    <property type="nucleotide sequence ID" value="NM_111376.4"/>
</dbReference>
<dbReference type="SMR" id="Q0WP44"/>
<dbReference type="BioGRID" id="5001">
    <property type="interactions" value="1"/>
</dbReference>
<dbReference type="FunCoup" id="Q0WP44">
    <property type="interactions" value="4345"/>
</dbReference>
<dbReference type="IntAct" id="Q0WP44">
    <property type="interactions" value="1"/>
</dbReference>
<dbReference type="STRING" id="3702.Q0WP44"/>
<dbReference type="iPTMnet" id="Q0WP44"/>
<dbReference type="PaxDb" id="3702-AT3G05040.1"/>
<dbReference type="ProteomicsDB" id="230370"/>
<dbReference type="EnsemblPlants" id="AT3G05040.1">
    <property type="protein sequence ID" value="AT3G05040.1"/>
    <property type="gene ID" value="AT3G05040"/>
</dbReference>
<dbReference type="GeneID" id="819666"/>
<dbReference type="Gramene" id="AT3G05040.1">
    <property type="protein sequence ID" value="AT3G05040.1"/>
    <property type="gene ID" value="AT3G05040"/>
</dbReference>
<dbReference type="KEGG" id="ath:AT3G05040"/>
<dbReference type="Araport" id="AT3G05040"/>
<dbReference type="TAIR" id="AT3G05040">
    <property type="gene designation" value="HST"/>
</dbReference>
<dbReference type="eggNOG" id="KOG2020">
    <property type="taxonomic scope" value="Eukaryota"/>
</dbReference>
<dbReference type="HOGENOM" id="CLU_004265_0_0_1"/>
<dbReference type="InParanoid" id="Q0WP44"/>
<dbReference type="OMA" id="IAKRSWG"/>
<dbReference type="PhylomeDB" id="Q0WP44"/>
<dbReference type="PRO" id="PR:Q0WP44"/>
<dbReference type="Proteomes" id="UP000006548">
    <property type="component" value="Chromosome 3"/>
</dbReference>
<dbReference type="ExpressionAtlas" id="Q0WP44">
    <property type="expression patterns" value="baseline and differential"/>
</dbReference>
<dbReference type="GO" id="GO:0005634">
    <property type="term" value="C:nucleus"/>
    <property type="evidence" value="ECO:0000314"/>
    <property type="project" value="UniProtKB"/>
</dbReference>
<dbReference type="GO" id="GO:0005049">
    <property type="term" value="F:nuclear export signal receptor activity"/>
    <property type="evidence" value="ECO:0000315"/>
    <property type="project" value="TAIR"/>
</dbReference>
<dbReference type="GO" id="GO:0009965">
    <property type="term" value="P:leaf morphogenesis"/>
    <property type="evidence" value="ECO:0000315"/>
    <property type="project" value="TAIR"/>
</dbReference>
<dbReference type="GO" id="GO:0061716">
    <property type="term" value="P:miRNA export from nucleus"/>
    <property type="evidence" value="ECO:0000315"/>
    <property type="project" value="UniProtKB"/>
</dbReference>
<dbReference type="GO" id="GO:0009910">
    <property type="term" value="P:negative regulation of flower development"/>
    <property type="evidence" value="ECO:0000315"/>
    <property type="project" value="TAIR"/>
</dbReference>
<dbReference type="GO" id="GO:0009944">
    <property type="term" value="P:polarity specification of adaxial/abaxial axis"/>
    <property type="evidence" value="ECO:0000315"/>
    <property type="project" value="TAIR"/>
</dbReference>
<dbReference type="GO" id="GO:0006611">
    <property type="term" value="P:protein export from nucleus"/>
    <property type="evidence" value="ECO:0007669"/>
    <property type="project" value="InterPro"/>
</dbReference>
<dbReference type="GO" id="GO:0031047">
    <property type="term" value="P:regulatory ncRNA-mediated gene silencing"/>
    <property type="evidence" value="ECO:0007669"/>
    <property type="project" value="UniProtKB-KW"/>
</dbReference>
<dbReference type="GO" id="GO:0048364">
    <property type="term" value="P:root development"/>
    <property type="evidence" value="ECO:0000315"/>
    <property type="project" value="TAIR"/>
</dbReference>
<dbReference type="GO" id="GO:0048367">
    <property type="term" value="P:shoot system development"/>
    <property type="evidence" value="ECO:0000315"/>
    <property type="project" value="TAIR"/>
</dbReference>
<dbReference type="FunFam" id="1.25.10.10:FF:000949">
    <property type="entry name" value="Protein HASTY 1"/>
    <property type="match status" value="1"/>
</dbReference>
<dbReference type="Gene3D" id="1.25.10.10">
    <property type="entry name" value="Leucine-rich Repeat Variant"/>
    <property type="match status" value="2"/>
</dbReference>
<dbReference type="InterPro" id="IPR011989">
    <property type="entry name" value="ARM-like"/>
</dbReference>
<dbReference type="InterPro" id="IPR016024">
    <property type="entry name" value="ARM-type_fold"/>
</dbReference>
<dbReference type="InterPro" id="IPR013598">
    <property type="entry name" value="Exportin-1/Importin-b-like"/>
</dbReference>
<dbReference type="InterPro" id="IPR045478">
    <property type="entry name" value="Exportin-5_C"/>
</dbReference>
<dbReference type="InterPro" id="IPR045065">
    <property type="entry name" value="XPO1/5"/>
</dbReference>
<dbReference type="PANTHER" id="PTHR11223">
    <property type="entry name" value="EXPORTIN 1/5"/>
    <property type="match status" value="1"/>
</dbReference>
<dbReference type="PANTHER" id="PTHR11223:SF3">
    <property type="entry name" value="EXPORTIN-5"/>
    <property type="match status" value="1"/>
</dbReference>
<dbReference type="Pfam" id="PF19273">
    <property type="entry name" value="Exportin-5"/>
    <property type="match status" value="1"/>
</dbReference>
<dbReference type="Pfam" id="PF08389">
    <property type="entry name" value="Xpo1"/>
    <property type="match status" value="1"/>
</dbReference>
<dbReference type="SUPFAM" id="SSF48371">
    <property type="entry name" value="ARM repeat"/>
    <property type="match status" value="1"/>
</dbReference>